<sequence>MPSEHPFSDGISTPNPKETMNDTAQITAGYGRRYIVRTPDGTTYEASTRKKRVDFACGDRVRISPVNAEQVVIEDFLPRQSLLYRQDAWKTKLIAANVTQLLIVTAAVPSPSVRLLQRALLAAEAAGIRAVIVLNKADLPETALWLEKLKFYETLGYPVIETRVLENADSLRPVLQGHSNILLGQSGMGKSTLANALLGSQTARTGDISAALDSGKHTTTHARLYDLNGETQLIDSPGLQEFGLHHLQAADLPHYFPDFRHLVGQCRFHNCTHRAEPGCAFKAAAETGAASPERLAFLQGITDELLG</sequence>
<reference key="1">
    <citation type="submission" date="2003-03" db="EMBL/GenBank/DDBJ databases">
        <title>The complete genome sequence of Neisseria gonorrhoeae.</title>
        <authorList>
            <person name="Lewis L.A."/>
            <person name="Gillaspy A.F."/>
            <person name="McLaughlin R.E."/>
            <person name="Gipson M."/>
            <person name="Ducey T.F."/>
            <person name="Ownbey T."/>
            <person name="Hartman K."/>
            <person name="Nydick C."/>
            <person name="Carson M.B."/>
            <person name="Vaughn J."/>
            <person name="Thomson C."/>
            <person name="Song L."/>
            <person name="Lin S."/>
            <person name="Yuan X."/>
            <person name="Najar F."/>
            <person name="Zhan M."/>
            <person name="Ren Q."/>
            <person name="Zhu H."/>
            <person name="Qi S."/>
            <person name="Kenton S.M."/>
            <person name="Lai H."/>
            <person name="White J.D."/>
            <person name="Clifton S."/>
            <person name="Roe B.A."/>
            <person name="Dyer D.W."/>
        </authorList>
    </citation>
    <scope>NUCLEOTIDE SEQUENCE [LARGE SCALE GENOMIC DNA]</scope>
    <source>
        <strain>ATCC 700825 / FA 1090</strain>
    </source>
</reference>
<protein>
    <recommendedName>
        <fullName evidence="1">Small ribosomal subunit biogenesis GTPase RsgA</fullName>
        <ecNumber evidence="1">3.6.1.-</ecNumber>
    </recommendedName>
</protein>
<evidence type="ECO:0000255" key="1">
    <source>
        <dbReference type="HAMAP-Rule" id="MF_01820"/>
    </source>
</evidence>
<evidence type="ECO:0000255" key="2">
    <source>
        <dbReference type="PROSITE-ProRule" id="PRU01058"/>
    </source>
</evidence>
<evidence type="ECO:0000256" key="3">
    <source>
        <dbReference type="SAM" id="MobiDB-lite"/>
    </source>
</evidence>
<organism>
    <name type="scientific">Neisseria gonorrhoeae (strain ATCC 700825 / FA 1090)</name>
    <dbReference type="NCBI Taxonomy" id="242231"/>
    <lineage>
        <taxon>Bacteria</taxon>
        <taxon>Pseudomonadati</taxon>
        <taxon>Pseudomonadota</taxon>
        <taxon>Betaproteobacteria</taxon>
        <taxon>Neisseriales</taxon>
        <taxon>Neisseriaceae</taxon>
        <taxon>Neisseria</taxon>
    </lineage>
</organism>
<proteinExistence type="inferred from homology"/>
<comment type="function">
    <text evidence="1">One of several proteins that assist in the late maturation steps of the functional core of the 30S ribosomal subunit. Helps release RbfA from mature subunits. May play a role in the assembly of ribosomal proteins into the subunit. Circularly permuted GTPase that catalyzes slow GTP hydrolysis, GTPase activity is stimulated by the 30S ribosomal subunit.</text>
</comment>
<comment type="cofactor">
    <cofactor evidence="1">
        <name>Zn(2+)</name>
        <dbReference type="ChEBI" id="CHEBI:29105"/>
    </cofactor>
    <text evidence="1">Binds 1 zinc ion per subunit.</text>
</comment>
<comment type="subunit">
    <text evidence="1">Monomer. Associates with 30S ribosomal subunit, binds 16S rRNA.</text>
</comment>
<comment type="subcellular location">
    <subcellularLocation>
        <location evidence="1">Cytoplasm</location>
    </subcellularLocation>
</comment>
<comment type="similarity">
    <text evidence="1">Belongs to the TRAFAC class YlqF/YawG GTPase family. RsgA subfamily.</text>
</comment>
<keyword id="KW-0963">Cytoplasm</keyword>
<keyword id="KW-0342">GTP-binding</keyword>
<keyword id="KW-0378">Hydrolase</keyword>
<keyword id="KW-0479">Metal-binding</keyword>
<keyword id="KW-0547">Nucleotide-binding</keyword>
<keyword id="KW-1185">Reference proteome</keyword>
<keyword id="KW-0690">Ribosome biogenesis</keyword>
<keyword id="KW-0694">RNA-binding</keyword>
<keyword id="KW-0699">rRNA-binding</keyword>
<keyword id="KW-0862">Zinc</keyword>
<name>RSGA_NEIG1</name>
<gene>
    <name evidence="1" type="primary">rsgA</name>
    <name type="ordered locus">NGO_1733</name>
</gene>
<dbReference type="EC" id="3.6.1.-" evidence="1"/>
<dbReference type="EMBL" id="AE004969">
    <property type="protein sequence ID" value="AAW90354.1"/>
    <property type="molecule type" value="Genomic_DNA"/>
</dbReference>
<dbReference type="RefSeq" id="WP_003694242.1">
    <property type="nucleotide sequence ID" value="NC_002946.2"/>
</dbReference>
<dbReference type="RefSeq" id="YP_208766.1">
    <property type="nucleotide sequence ID" value="NC_002946.2"/>
</dbReference>
<dbReference type="SMR" id="Q5F633"/>
<dbReference type="STRING" id="242231.NGO_1733"/>
<dbReference type="KEGG" id="ngo:NGO_1733"/>
<dbReference type="PATRIC" id="fig|242231.10.peg.2072"/>
<dbReference type="HOGENOM" id="CLU_033617_2_0_4"/>
<dbReference type="Proteomes" id="UP000000535">
    <property type="component" value="Chromosome"/>
</dbReference>
<dbReference type="GO" id="GO:0005737">
    <property type="term" value="C:cytoplasm"/>
    <property type="evidence" value="ECO:0007669"/>
    <property type="project" value="UniProtKB-SubCell"/>
</dbReference>
<dbReference type="GO" id="GO:0005525">
    <property type="term" value="F:GTP binding"/>
    <property type="evidence" value="ECO:0007669"/>
    <property type="project" value="UniProtKB-UniRule"/>
</dbReference>
<dbReference type="GO" id="GO:0003924">
    <property type="term" value="F:GTPase activity"/>
    <property type="evidence" value="ECO:0007669"/>
    <property type="project" value="UniProtKB-UniRule"/>
</dbReference>
<dbReference type="GO" id="GO:0046872">
    <property type="term" value="F:metal ion binding"/>
    <property type="evidence" value="ECO:0007669"/>
    <property type="project" value="UniProtKB-KW"/>
</dbReference>
<dbReference type="GO" id="GO:0019843">
    <property type="term" value="F:rRNA binding"/>
    <property type="evidence" value="ECO:0007669"/>
    <property type="project" value="UniProtKB-KW"/>
</dbReference>
<dbReference type="GO" id="GO:0042274">
    <property type="term" value="P:ribosomal small subunit biogenesis"/>
    <property type="evidence" value="ECO:0007669"/>
    <property type="project" value="UniProtKB-UniRule"/>
</dbReference>
<dbReference type="CDD" id="cd01854">
    <property type="entry name" value="YjeQ_EngC"/>
    <property type="match status" value="1"/>
</dbReference>
<dbReference type="Gene3D" id="3.40.50.300">
    <property type="entry name" value="P-loop containing nucleotide triphosphate hydrolases"/>
    <property type="match status" value="1"/>
</dbReference>
<dbReference type="Gene3D" id="1.10.40.50">
    <property type="entry name" value="Probable gtpase engc, domain 3"/>
    <property type="match status" value="1"/>
</dbReference>
<dbReference type="HAMAP" id="MF_01820">
    <property type="entry name" value="GTPase_RsgA"/>
    <property type="match status" value="1"/>
</dbReference>
<dbReference type="InterPro" id="IPR030378">
    <property type="entry name" value="G_CP_dom"/>
</dbReference>
<dbReference type="InterPro" id="IPR027417">
    <property type="entry name" value="P-loop_NTPase"/>
</dbReference>
<dbReference type="InterPro" id="IPR004881">
    <property type="entry name" value="Ribosome_biogen_GTPase_RsgA"/>
</dbReference>
<dbReference type="InterPro" id="IPR010914">
    <property type="entry name" value="RsgA_GTPase_dom"/>
</dbReference>
<dbReference type="NCBIfam" id="TIGR00157">
    <property type="entry name" value="ribosome small subunit-dependent GTPase A"/>
    <property type="match status" value="1"/>
</dbReference>
<dbReference type="PANTHER" id="PTHR32120">
    <property type="entry name" value="SMALL RIBOSOMAL SUBUNIT BIOGENESIS GTPASE RSGA"/>
    <property type="match status" value="1"/>
</dbReference>
<dbReference type="PANTHER" id="PTHR32120:SF11">
    <property type="entry name" value="SMALL RIBOSOMAL SUBUNIT BIOGENESIS GTPASE RSGA 1, MITOCHONDRIAL-RELATED"/>
    <property type="match status" value="1"/>
</dbReference>
<dbReference type="Pfam" id="PF03193">
    <property type="entry name" value="RsgA_GTPase"/>
    <property type="match status" value="1"/>
</dbReference>
<dbReference type="SUPFAM" id="SSF52540">
    <property type="entry name" value="P-loop containing nucleoside triphosphate hydrolases"/>
    <property type="match status" value="1"/>
</dbReference>
<dbReference type="PROSITE" id="PS50936">
    <property type="entry name" value="ENGC_GTPASE"/>
    <property type="match status" value="1"/>
</dbReference>
<dbReference type="PROSITE" id="PS51721">
    <property type="entry name" value="G_CP"/>
    <property type="match status" value="1"/>
</dbReference>
<accession>Q5F633</accession>
<feature type="chain" id="PRO_1000188106" description="Small ribosomal subunit biogenesis GTPase RsgA">
    <location>
        <begin position="1"/>
        <end position="307"/>
    </location>
</feature>
<feature type="domain" description="CP-type G" evidence="2">
    <location>
        <begin position="85"/>
        <end position="242"/>
    </location>
</feature>
<feature type="region of interest" description="Disordered" evidence="3">
    <location>
        <begin position="1"/>
        <end position="21"/>
    </location>
</feature>
<feature type="compositionally biased region" description="Polar residues" evidence="3">
    <location>
        <begin position="10"/>
        <end position="21"/>
    </location>
</feature>
<feature type="binding site" evidence="1">
    <location>
        <begin position="135"/>
        <end position="138"/>
    </location>
    <ligand>
        <name>GTP</name>
        <dbReference type="ChEBI" id="CHEBI:37565"/>
    </ligand>
</feature>
<feature type="binding site" evidence="1">
    <location>
        <begin position="184"/>
        <end position="192"/>
    </location>
    <ligand>
        <name>GTP</name>
        <dbReference type="ChEBI" id="CHEBI:37565"/>
    </ligand>
</feature>
<feature type="binding site" evidence="1">
    <location>
        <position position="266"/>
    </location>
    <ligand>
        <name>Zn(2+)</name>
        <dbReference type="ChEBI" id="CHEBI:29105"/>
    </ligand>
</feature>
<feature type="binding site" evidence="1">
    <location>
        <position position="271"/>
    </location>
    <ligand>
        <name>Zn(2+)</name>
        <dbReference type="ChEBI" id="CHEBI:29105"/>
    </ligand>
</feature>
<feature type="binding site" evidence="1">
    <location>
        <position position="273"/>
    </location>
    <ligand>
        <name>Zn(2+)</name>
        <dbReference type="ChEBI" id="CHEBI:29105"/>
    </ligand>
</feature>
<feature type="binding site" evidence="1">
    <location>
        <position position="279"/>
    </location>
    <ligand>
        <name>Zn(2+)</name>
        <dbReference type="ChEBI" id="CHEBI:29105"/>
    </ligand>
</feature>